<name>SYDND_COXBU</name>
<reference key="1">
    <citation type="journal article" date="2003" name="Proc. Natl. Acad. Sci. U.S.A.">
        <title>Complete genome sequence of the Q-fever pathogen, Coxiella burnetii.</title>
        <authorList>
            <person name="Seshadri R."/>
            <person name="Paulsen I.T."/>
            <person name="Eisen J.A."/>
            <person name="Read T.D."/>
            <person name="Nelson K.E."/>
            <person name="Nelson W.C."/>
            <person name="Ward N.L."/>
            <person name="Tettelin H."/>
            <person name="Davidsen T.M."/>
            <person name="Beanan M.J."/>
            <person name="DeBoy R.T."/>
            <person name="Daugherty S.C."/>
            <person name="Brinkac L.M."/>
            <person name="Madupu R."/>
            <person name="Dodson R.J."/>
            <person name="Khouri H.M."/>
            <person name="Lee K.H."/>
            <person name="Carty H.A."/>
            <person name="Scanlan D."/>
            <person name="Heinzen R.A."/>
            <person name="Thompson H.A."/>
            <person name="Samuel J.E."/>
            <person name="Fraser C.M."/>
            <person name="Heidelberg J.F."/>
        </authorList>
    </citation>
    <scope>NUCLEOTIDE SEQUENCE [LARGE SCALE GENOMIC DNA]</scope>
    <source>
        <strain>RSA 493 / Nine Mile phase I</strain>
    </source>
</reference>
<protein>
    <recommendedName>
        <fullName evidence="1">Aspartate--tRNA(Asp/Asn) ligase</fullName>
        <ecNumber evidence="1">6.1.1.23</ecNumber>
    </recommendedName>
    <alternativeName>
        <fullName evidence="1">Aspartyl-tRNA synthetase</fullName>
        <shortName evidence="1">AspRS</shortName>
    </alternativeName>
    <alternativeName>
        <fullName evidence="1">Non-discriminating aspartyl-tRNA synthetase</fullName>
        <shortName evidence="1">ND-AspRS</shortName>
    </alternativeName>
</protein>
<feature type="chain" id="PRO_0000110864" description="Aspartate--tRNA(Asp/Asn) ligase">
    <location>
        <begin position="1"/>
        <end position="590"/>
    </location>
</feature>
<feature type="region of interest" description="Aspartate" evidence="1">
    <location>
        <begin position="197"/>
        <end position="200"/>
    </location>
</feature>
<feature type="binding site" evidence="1">
    <location>
        <position position="173"/>
    </location>
    <ligand>
        <name>L-aspartate</name>
        <dbReference type="ChEBI" id="CHEBI:29991"/>
    </ligand>
</feature>
<feature type="binding site" evidence="1">
    <location>
        <begin position="219"/>
        <end position="221"/>
    </location>
    <ligand>
        <name>ATP</name>
        <dbReference type="ChEBI" id="CHEBI:30616"/>
    </ligand>
</feature>
<feature type="binding site" evidence="1">
    <location>
        <position position="219"/>
    </location>
    <ligand>
        <name>L-aspartate</name>
        <dbReference type="ChEBI" id="CHEBI:29991"/>
    </ligand>
</feature>
<feature type="binding site" evidence="1">
    <location>
        <position position="228"/>
    </location>
    <ligand>
        <name>ATP</name>
        <dbReference type="ChEBI" id="CHEBI:30616"/>
    </ligand>
</feature>
<feature type="binding site" evidence="1">
    <location>
        <position position="450"/>
    </location>
    <ligand>
        <name>L-aspartate</name>
        <dbReference type="ChEBI" id="CHEBI:29991"/>
    </ligand>
</feature>
<feature type="binding site" evidence="1">
    <location>
        <position position="484"/>
    </location>
    <ligand>
        <name>ATP</name>
        <dbReference type="ChEBI" id="CHEBI:30616"/>
    </ligand>
</feature>
<feature type="binding site" evidence="1">
    <location>
        <position position="491"/>
    </location>
    <ligand>
        <name>L-aspartate</name>
        <dbReference type="ChEBI" id="CHEBI:29991"/>
    </ligand>
</feature>
<feature type="binding site" evidence="1">
    <location>
        <begin position="536"/>
        <end position="539"/>
    </location>
    <ligand>
        <name>ATP</name>
        <dbReference type="ChEBI" id="CHEBI:30616"/>
    </ligand>
</feature>
<feature type="site" description="Important for tRNA non-discrimination" evidence="1">
    <location>
        <position position="30"/>
    </location>
</feature>
<feature type="site" description="Important for tRNA non-discrimination" evidence="1">
    <location>
        <position position="81"/>
    </location>
</feature>
<organism>
    <name type="scientific">Coxiella burnetii (strain RSA 493 / Nine Mile phase I)</name>
    <dbReference type="NCBI Taxonomy" id="227377"/>
    <lineage>
        <taxon>Bacteria</taxon>
        <taxon>Pseudomonadati</taxon>
        <taxon>Pseudomonadota</taxon>
        <taxon>Gammaproteobacteria</taxon>
        <taxon>Legionellales</taxon>
        <taxon>Coxiellaceae</taxon>
        <taxon>Coxiella</taxon>
    </lineage>
</organism>
<sequence length="590" mass="66755">MRTHYADKVDSSLIDQTITLCGWVHRRRDHGGLIFIDLRDREGLVQVVCNPTESTVFKVAESLRNEYVIKVTGKVHKRPEGTVNPHIPSGEVEIAASDITLLNKSKPLPFNIDEYQEVSEEVRLKFRYLDLRRPEVAQRLKMRSYIIREIRRFLDERGFLDIETPMLTKSTPEGARDYLVPSRTHPGQFFALPQSPQIFKEILMVAGFDRYYQIVRCFRDEDLRADRQPEFTQLDLEMSFVEEKDIQQLMETMIRHLFSTFLNVPLPDPFPRITYDEAIKTYGTDRPDLRNPLTLVDVTDLMKSVEFKVFKEPANNPHGRIAVLRLPKGAELSRKAIDDYTQFVGIYGAKGLAYIKVENIDNGTGGLHSPILKFLPENVIAEILKRTQAQSGDILFFGADKAKIVNESLGALRDRLCADLNLYEGQWKPVWVVDFPMFDREDVGDWQALHHPFTALQETDPEKVIANPGDVLSRAYDMVLNGSEIGGGSIRINDIGMQYAVLKVLGISKEMAEAQFGHLLMALQFGSPPLGGIAFGLDRLVAIMTGASSIRDVIAFPKTQTAQCPLTNAPAQVETLQLETLGLKVSKHRK</sequence>
<keyword id="KW-0030">Aminoacyl-tRNA synthetase</keyword>
<keyword id="KW-0067">ATP-binding</keyword>
<keyword id="KW-0963">Cytoplasm</keyword>
<keyword id="KW-0436">Ligase</keyword>
<keyword id="KW-0547">Nucleotide-binding</keyword>
<keyword id="KW-0648">Protein biosynthesis</keyword>
<keyword id="KW-1185">Reference proteome</keyword>
<dbReference type="EC" id="6.1.1.23" evidence="1"/>
<dbReference type="EMBL" id="AE016828">
    <property type="protein sequence ID" value="AAO91062.2"/>
    <property type="status" value="ALT_INIT"/>
    <property type="molecule type" value="Genomic_DNA"/>
</dbReference>
<dbReference type="RefSeq" id="NP_820548.2">
    <property type="nucleotide sequence ID" value="NC_002971.3"/>
</dbReference>
<dbReference type="SMR" id="Q83BE5"/>
<dbReference type="STRING" id="227377.CBU_1565"/>
<dbReference type="EnsemblBacteria" id="AAO91062">
    <property type="protein sequence ID" value="AAO91062"/>
    <property type="gene ID" value="CBU_1565"/>
</dbReference>
<dbReference type="GeneID" id="1209475"/>
<dbReference type="KEGG" id="cbu:CBU_1565"/>
<dbReference type="PATRIC" id="fig|227377.7.peg.1566"/>
<dbReference type="eggNOG" id="COG0173">
    <property type="taxonomic scope" value="Bacteria"/>
</dbReference>
<dbReference type="HOGENOM" id="CLU_014330_3_2_6"/>
<dbReference type="OrthoDB" id="9802326at2"/>
<dbReference type="Proteomes" id="UP000002671">
    <property type="component" value="Chromosome"/>
</dbReference>
<dbReference type="GO" id="GO:0005737">
    <property type="term" value="C:cytoplasm"/>
    <property type="evidence" value="ECO:0007669"/>
    <property type="project" value="UniProtKB-SubCell"/>
</dbReference>
<dbReference type="GO" id="GO:0004815">
    <property type="term" value="F:aspartate-tRNA ligase activity"/>
    <property type="evidence" value="ECO:0000318"/>
    <property type="project" value="GO_Central"/>
</dbReference>
<dbReference type="GO" id="GO:0050560">
    <property type="term" value="F:aspartate-tRNA(Asn) ligase activity"/>
    <property type="evidence" value="ECO:0007669"/>
    <property type="project" value="UniProtKB-EC"/>
</dbReference>
<dbReference type="GO" id="GO:0005524">
    <property type="term" value="F:ATP binding"/>
    <property type="evidence" value="ECO:0007669"/>
    <property type="project" value="UniProtKB-UniRule"/>
</dbReference>
<dbReference type="GO" id="GO:0003676">
    <property type="term" value="F:nucleic acid binding"/>
    <property type="evidence" value="ECO:0007669"/>
    <property type="project" value="InterPro"/>
</dbReference>
<dbReference type="GO" id="GO:0006422">
    <property type="term" value="P:aspartyl-tRNA aminoacylation"/>
    <property type="evidence" value="ECO:0000318"/>
    <property type="project" value="GO_Central"/>
</dbReference>
<dbReference type="CDD" id="cd00777">
    <property type="entry name" value="AspRS_core"/>
    <property type="match status" value="1"/>
</dbReference>
<dbReference type="CDD" id="cd04317">
    <property type="entry name" value="EcAspRS_like_N"/>
    <property type="match status" value="1"/>
</dbReference>
<dbReference type="Gene3D" id="3.30.930.10">
    <property type="entry name" value="Bira Bifunctional Protein, Domain 2"/>
    <property type="match status" value="1"/>
</dbReference>
<dbReference type="Gene3D" id="3.30.1360.30">
    <property type="entry name" value="GAD-like domain"/>
    <property type="match status" value="1"/>
</dbReference>
<dbReference type="Gene3D" id="2.40.50.140">
    <property type="entry name" value="Nucleic acid-binding proteins"/>
    <property type="match status" value="1"/>
</dbReference>
<dbReference type="HAMAP" id="MF_00044">
    <property type="entry name" value="Asp_tRNA_synth_type1"/>
    <property type="match status" value="1"/>
</dbReference>
<dbReference type="InterPro" id="IPR004364">
    <property type="entry name" value="Aa-tRNA-synt_II"/>
</dbReference>
<dbReference type="InterPro" id="IPR006195">
    <property type="entry name" value="aa-tRNA-synth_II"/>
</dbReference>
<dbReference type="InterPro" id="IPR045864">
    <property type="entry name" value="aa-tRNA-synth_II/BPL/LPL"/>
</dbReference>
<dbReference type="InterPro" id="IPR004524">
    <property type="entry name" value="Asp-tRNA-ligase_1"/>
</dbReference>
<dbReference type="InterPro" id="IPR047089">
    <property type="entry name" value="Asp-tRNA-ligase_1_N"/>
</dbReference>
<dbReference type="InterPro" id="IPR002312">
    <property type="entry name" value="Asp/Asn-tRNA-synth_IIb"/>
</dbReference>
<dbReference type="InterPro" id="IPR047090">
    <property type="entry name" value="AspRS_core"/>
</dbReference>
<dbReference type="InterPro" id="IPR004115">
    <property type="entry name" value="GAD-like_sf"/>
</dbReference>
<dbReference type="InterPro" id="IPR029351">
    <property type="entry name" value="GAD_dom"/>
</dbReference>
<dbReference type="InterPro" id="IPR012340">
    <property type="entry name" value="NA-bd_OB-fold"/>
</dbReference>
<dbReference type="InterPro" id="IPR004365">
    <property type="entry name" value="NA-bd_OB_tRNA"/>
</dbReference>
<dbReference type="NCBIfam" id="TIGR00459">
    <property type="entry name" value="aspS_bact"/>
    <property type="match status" value="1"/>
</dbReference>
<dbReference type="NCBIfam" id="NF001750">
    <property type="entry name" value="PRK00476.1"/>
    <property type="match status" value="1"/>
</dbReference>
<dbReference type="PANTHER" id="PTHR22594:SF5">
    <property type="entry name" value="ASPARTATE--TRNA LIGASE, MITOCHONDRIAL"/>
    <property type="match status" value="1"/>
</dbReference>
<dbReference type="PANTHER" id="PTHR22594">
    <property type="entry name" value="ASPARTYL/LYSYL-TRNA SYNTHETASE"/>
    <property type="match status" value="1"/>
</dbReference>
<dbReference type="Pfam" id="PF02938">
    <property type="entry name" value="GAD"/>
    <property type="match status" value="1"/>
</dbReference>
<dbReference type="Pfam" id="PF00152">
    <property type="entry name" value="tRNA-synt_2"/>
    <property type="match status" value="1"/>
</dbReference>
<dbReference type="Pfam" id="PF01336">
    <property type="entry name" value="tRNA_anti-codon"/>
    <property type="match status" value="1"/>
</dbReference>
<dbReference type="PRINTS" id="PR01042">
    <property type="entry name" value="TRNASYNTHASP"/>
</dbReference>
<dbReference type="SUPFAM" id="SSF55681">
    <property type="entry name" value="Class II aaRS and biotin synthetases"/>
    <property type="match status" value="1"/>
</dbReference>
<dbReference type="SUPFAM" id="SSF55261">
    <property type="entry name" value="GAD domain-like"/>
    <property type="match status" value="1"/>
</dbReference>
<dbReference type="SUPFAM" id="SSF50249">
    <property type="entry name" value="Nucleic acid-binding proteins"/>
    <property type="match status" value="1"/>
</dbReference>
<dbReference type="PROSITE" id="PS50862">
    <property type="entry name" value="AA_TRNA_LIGASE_II"/>
    <property type="match status" value="1"/>
</dbReference>
<accession>Q83BE5</accession>
<evidence type="ECO:0000255" key="1">
    <source>
        <dbReference type="HAMAP-Rule" id="MF_00044"/>
    </source>
</evidence>
<evidence type="ECO:0000305" key="2"/>
<comment type="function">
    <text evidence="1">Aspartyl-tRNA synthetase with relaxed tRNA specificity since it is able to aspartylate not only its cognate tRNA(Asp) but also tRNA(Asn). Reaction proceeds in two steps: L-aspartate is first activated by ATP to form Asp-AMP and then transferred to the acceptor end of tRNA(Asp/Asn).</text>
</comment>
<comment type="catalytic activity">
    <reaction evidence="1">
        <text>tRNA(Asx) + L-aspartate + ATP = L-aspartyl-tRNA(Asx) + AMP + diphosphate</text>
        <dbReference type="Rhea" id="RHEA:18349"/>
        <dbReference type="Rhea" id="RHEA-COMP:9710"/>
        <dbReference type="Rhea" id="RHEA-COMP:9711"/>
        <dbReference type="ChEBI" id="CHEBI:29991"/>
        <dbReference type="ChEBI" id="CHEBI:30616"/>
        <dbReference type="ChEBI" id="CHEBI:33019"/>
        <dbReference type="ChEBI" id="CHEBI:78442"/>
        <dbReference type="ChEBI" id="CHEBI:78516"/>
        <dbReference type="ChEBI" id="CHEBI:456215"/>
        <dbReference type="EC" id="6.1.1.23"/>
    </reaction>
</comment>
<comment type="subunit">
    <text evidence="1">Homodimer.</text>
</comment>
<comment type="subcellular location">
    <subcellularLocation>
        <location evidence="1">Cytoplasm</location>
    </subcellularLocation>
</comment>
<comment type="similarity">
    <text evidence="1">Belongs to the class-II aminoacyl-tRNA synthetase family. Type 1 subfamily.</text>
</comment>
<comment type="sequence caution" evidence="2">
    <conflict type="erroneous initiation">
        <sequence resource="EMBL-CDS" id="AAO91062"/>
    </conflict>
</comment>
<gene>
    <name evidence="1" type="primary">aspS</name>
    <name type="ordered locus">CBU_1565</name>
</gene>
<proteinExistence type="inferred from homology"/>